<organism>
    <name type="scientific">Canis lupus familiaris</name>
    <name type="common">Dog</name>
    <name type="synonym">Canis familiaris</name>
    <dbReference type="NCBI Taxonomy" id="9615"/>
    <lineage>
        <taxon>Eukaryota</taxon>
        <taxon>Metazoa</taxon>
        <taxon>Chordata</taxon>
        <taxon>Craniata</taxon>
        <taxon>Vertebrata</taxon>
        <taxon>Euteleostomi</taxon>
        <taxon>Mammalia</taxon>
        <taxon>Eutheria</taxon>
        <taxon>Laurasiatheria</taxon>
        <taxon>Carnivora</taxon>
        <taxon>Caniformia</taxon>
        <taxon>Canidae</taxon>
        <taxon>Canis</taxon>
    </lineage>
</organism>
<proteinExistence type="evidence at transcript level"/>
<keyword id="KW-0007">Acetylation</keyword>
<keyword id="KW-0965">Cell junction</keyword>
<keyword id="KW-1003">Cell membrane</keyword>
<keyword id="KW-1015">Disulfide bond</keyword>
<keyword id="KW-0256">Endoplasmic reticulum</keyword>
<keyword id="KW-0303">Gap junction</keyword>
<keyword id="KW-1017">Isopeptide bond</keyword>
<keyword id="KW-0472">Membrane</keyword>
<keyword id="KW-0597">Phosphoprotein</keyword>
<keyword id="KW-1185">Reference proteome</keyword>
<keyword id="KW-0702">S-nitrosylation</keyword>
<keyword id="KW-0812">Transmembrane</keyword>
<keyword id="KW-1133">Transmembrane helix</keyword>
<keyword id="KW-0832">Ubl conjugation</keyword>
<name>CXA1_CANLF</name>
<evidence type="ECO:0000250" key="1">
    <source>
        <dbReference type="UniProtKB" id="P08050"/>
    </source>
</evidence>
<evidence type="ECO:0000250" key="2">
    <source>
        <dbReference type="UniProtKB" id="P17302"/>
    </source>
</evidence>
<evidence type="ECO:0000250" key="3">
    <source>
        <dbReference type="UniProtKB" id="P23242"/>
    </source>
</evidence>
<evidence type="ECO:0000250" key="4">
    <source>
        <dbReference type="UniProtKB" id="Q6TYA7"/>
    </source>
</evidence>
<evidence type="ECO:0000255" key="5"/>
<evidence type="ECO:0000256" key="6">
    <source>
        <dbReference type="SAM" id="MobiDB-lite"/>
    </source>
</evidence>
<evidence type="ECO:0000305" key="7"/>
<dbReference type="EMBL" id="AY462223">
    <property type="protein sequence ID" value="AAR25626.1"/>
    <property type="molecule type" value="mRNA"/>
</dbReference>
<dbReference type="BMRB" id="Q6S9C0"/>
<dbReference type="SMR" id="Q6S9C0"/>
<dbReference type="FunCoup" id="Q6S9C0">
    <property type="interactions" value="108"/>
</dbReference>
<dbReference type="STRING" id="9615.ENSCAFP00000041768"/>
<dbReference type="PaxDb" id="9612-ENSCAFP00000041768"/>
<dbReference type="eggNOG" id="ENOG502QRAE">
    <property type="taxonomic scope" value="Eukaryota"/>
</dbReference>
<dbReference type="InParanoid" id="Q6S9C0"/>
<dbReference type="OrthoDB" id="8773830at2759"/>
<dbReference type="Proteomes" id="UP000002254">
    <property type="component" value="Unplaced"/>
</dbReference>
<dbReference type="Proteomes" id="UP000694429">
    <property type="component" value="Unplaced"/>
</dbReference>
<dbReference type="Proteomes" id="UP000694542">
    <property type="component" value="Unplaced"/>
</dbReference>
<dbReference type="Proteomes" id="UP000805418">
    <property type="component" value="Unplaced"/>
</dbReference>
<dbReference type="GO" id="GO:0016324">
    <property type="term" value="C:apical plasma membrane"/>
    <property type="evidence" value="ECO:0000250"/>
    <property type="project" value="UniProtKB"/>
</dbReference>
<dbReference type="GO" id="GO:0030054">
    <property type="term" value="C:cell junction"/>
    <property type="evidence" value="ECO:0000250"/>
    <property type="project" value="UniProtKB"/>
</dbReference>
<dbReference type="GO" id="GO:0005922">
    <property type="term" value="C:connexin complex"/>
    <property type="evidence" value="ECO:0000314"/>
    <property type="project" value="BHF-UCL"/>
</dbReference>
<dbReference type="GO" id="GO:0005783">
    <property type="term" value="C:endoplasmic reticulum"/>
    <property type="evidence" value="ECO:0007669"/>
    <property type="project" value="UniProtKB-SubCell"/>
</dbReference>
<dbReference type="GO" id="GO:0014704">
    <property type="term" value="C:intercalated disc"/>
    <property type="evidence" value="ECO:0000250"/>
    <property type="project" value="UniProtKB"/>
</dbReference>
<dbReference type="GO" id="GO:0005739">
    <property type="term" value="C:mitochondrion"/>
    <property type="evidence" value="ECO:0000250"/>
    <property type="project" value="UniProtKB"/>
</dbReference>
<dbReference type="GO" id="GO:0005886">
    <property type="term" value="C:plasma membrane"/>
    <property type="evidence" value="ECO:0000250"/>
    <property type="project" value="UniProtKB"/>
</dbReference>
<dbReference type="GO" id="GO:0005243">
    <property type="term" value="F:gap junction channel activity"/>
    <property type="evidence" value="ECO:0000318"/>
    <property type="project" value="GO_Central"/>
</dbReference>
<dbReference type="GO" id="GO:0055077">
    <property type="term" value="F:gap junction hemi-channel activity"/>
    <property type="evidence" value="ECO:0000250"/>
    <property type="project" value="UniProtKB"/>
</dbReference>
<dbReference type="GO" id="GO:0015631">
    <property type="term" value="F:tubulin binding"/>
    <property type="evidence" value="ECO:0000250"/>
    <property type="project" value="UniProtKB"/>
</dbReference>
<dbReference type="GO" id="GO:0060348">
    <property type="term" value="P:bone development"/>
    <property type="evidence" value="ECO:0000250"/>
    <property type="project" value="UniProtKB"/>
</dbReference>
<dbReference type="GO" id="GO:0046849">
    <property type="term" value="P:bone remodeling"/>
    <property type="evidence" value="ECO:0000250"/>
    <property type="project" value="UniProtKB"/>
</dbReference>
<dbReference type="GO" id="GO:0010644">
    <property type="term" value="P:cell communication by electrical coupling"/>
    <property type="evidence" value="ECO:0000318"/>
    <property type="project" value="GO_Central"/>
</dbReference>
<dbReference type="GO" id="GO:0007267">
    <property type="term" value="P:cell-cell signaling"/>
    <property type="evidence" value="ECO:0000318"/>
    <property type="project" value="GO_Central"/>
</dbReference>
<dbReference type="GO" id="GO:0007507">
    <property type="term" value="P:heart development"/>
    <property type="evidence" value="ECO:0000318"/>
    <property type="project" value="GO_Central"/>
</dbReference>
<dbReference type="GO" id="GO:0099111">
    <property type="term" value="P:microtubule-based transport"/>
    <property type="evidence" value="ECO:0000250"/>
    <property type="project" value="UniProtKB"/>
</dbReference>
<dbReference type="GO" id="GO:0030308">
    <property type="term" value="P:negative regulation of cell growth"/>
    <property type="evidence" value="ECO:0000250"/>
    <property type="project" value="UniProtKB"/>
</dbReference>
<dbReference type="GO" id="GO:0042981">
    <property type="term" value="P:regulation of apoptotic process"/>
    <property type="evidence" value="ECO:0000250"/>
    <property type="project" value="UniProtKB"/>
</dbReference>
<dbReference type="GO" id="GO:0007283">
    <property type="term" value="P:spermatogenesis"/>
    <property type="evidence" value="ECO:0000250"/>
    <property type="project" value="UniProtKB"/>
</dbReference>
<dbReference type="FunFam" id="1.20.1440.80:FF:000001">
    <property type="entry name" value="Gap junction alpha-1"/>
    <property type="match status" value="1"/>
</dbReference>
<dbReference type="FunFam" id="1.20.5.1130:FF:000001">
    <property type="entry name" value="Gap junction alpha-1"/>
    <property type="match status" value="1"/>
</dbReference>
<dbReference type="Gene3D" id="1.20.5.1130">
    <property type="entry name" value="Connexin43"/>
    <property type="match status" value="1"/>
</dbReference>
<dbReference type="Gene3D" id="1.20.1440.80">
    <property type="entry name" value="Gap junction channel protein cysteine-rich domain"/>
    <property type="match status" value="1"/>
</dbReference>
<dbReference type="InterPro" id="IPR035091">
    <property type="entry name" value="Alpha_helix_dom_sf"/>
</dbReference>
<dbReference type="InterPro" id="IPR000500">
    <property type="entry name" value="Connexin"/>
</dbReference>
<dbReference type="InterPro" id="IPR002261">
    <property type="entry name" value="Connexin43"/>
</dbReference>
<dbReference type="InterPro" id="IPR013124">
    <property type="entry name" value="Connexin43_C"/>
</dbReference>
<dbReference type="InterPro" id="IPR034634">
    <property type="entry name" value="Connexin_C"/>
</dbReference>
<dbReference type="InterPro" id="IPR019570">
    <property type="entry name" value="Connexin_CCC"/>
</dbReference>
<dbReference type="InterPro" id="IPR017990">
    <property type="entry name" value="Connexin_CS"/>
</dbReference>
<dbReference type="InterPro" id="IPR013092">
    <property type="entry name" value="Connexin_N"/>
</dbReference>
<dbReference type="InterPro" id="IPR038359">
    <property type="entry name" value="Connexin_N_sf"/>
</dbReference>
<dbReference type="PANTHER" id="PTHR11984">
    <property type="entry name" value="CONNEXIN"/>
    <property type="match status" value="1"/>
</dbReference>
<dbReference type="PANTHER" id="PTHR11984:SF33">
    <property type="entry name" value="GAP JUNCTION ALPHA-1 PROTEIN"/>
    <property type="match status" value="1"/>
</dbReference>
<dbReference type="Pfam" id="PF00029">
    <property type="entry name" value="Connexin"/>
    <property type="match status" value="1"/>
</dbReference>
<dbReference type="Pfam" id="PF03508">
    <property type="entry name" value="Connexin43"/>
    <property type="match status" value="1"/>
</dbReference>
<dbReference type="PRINTS" id="PR00206">
    <property type="entry name" value="CONNEXIN"/>
</dbReference>
<dbReference type="PRINTS" id="PR01132">
    <property type="entry name" value="CONNEXINA1"/>
</dbReference>
<dbReference type="SMART" id="SM00037">
    <property type="entry name" value="CNX"/>
    <property type="match status" value="1"/>
</dbReference>
<dbReference type="SMART" id="SM01089">
    <property type="entry name" value="Connexin_CCC"/>
    <property type="match status" value="1"/>
</dbReference>
<dbReference type="SUPFAM" id="SSF118220">
    <property type="entry name" value="Connexin43"/>
    <property type="match status" value="1"/>
</dbReference>
<dbReference type="PROSITE" id="PS00407">
    <property type="entry name" value="CONNEXINS_1"/>
    <property type="match status" value="1"/>
</dbReference>
<dbReference type="PROSITE" id="PS00408">
    <property type="entry name" value="CONNEXINS_2"/>
    <property type="match status" value="1"/>
</dbReference>
<feature type="initiator methionine" description="Removed" evidence="1">
    <location>
        <position position="1"/>
    </location>
</feature>
<feature type="chain" id="PRO_0000057800" description="Gap junction alpha-1 protein">
    <location>
        <begin position="2"/>
        <end position="382"/>
    </location>
</feature>
<feature type="topological domain" description="Cytoplasmic" evidence="1">
    <location>
        <begin position="2"/>
        <end position="23"/>
    </location>
</feature>
<feature type="transmembrane region" description="Helical" evidence="5">
    <location>
        <begin position="24"/>
        <end position="44"/>
    </location>
</feature>
<feature type="topological domain" description="Extracellular" evidence="1">
    <location>
        <begin position="45"/>
        <end position="76"/>
    </location>
</feature>
<feature type="transmembrane region" description="Helical" evidence="5">
    <location>
        <begin position="77"/>
        <end position="97"/>
    </location>
</feature>
<feature type="topological domain" description="Cytoplasmic" evidence="1">
    <location>
        <begin position="98"/>
        <end position="155"/>
    </location>
</feature>
<feature type="transmembrane region" description="Helical" evidence="5">
    <location>
        <begin position="156"/>
        <end position="176"/>
    </location>
</feature>
<feature type="topological domain" description="Extracellular" evidence="1">
    <location>
        <begin position="177"/>
        <end position="207"/>
    </location>
</feature>
<feature type="transmembrane region" description="Helical" evidence="5">
    <location>
        <begin position="208"/>
        <end position="228"/>
    </location>
</feature>
<feature type="topological domain" description="Cytoplasmic" evidence="1">
    <location>
        <begin position="229"/>
        <end position="382"/>
    </location>
</feature>
<feature type="region of interest" description="Interaction with NOV" evidence="1">
    <location>
        <begin position="244"/>
        <end position="382"/>
    </location>
</feature>
<feature type="region of interest" description="Interaction with UBQLN4" evidence="3">
    <location>
        <begin position="264"/>
        <end position="382"/>
    </location>
</feature>
<feature type="region of interest" description="Disordered" evidence="6">
    <location>
        <begin position="317"/>
        <end position="382"/>
    </location>
</feature>
<feature type="compositionally biased region" description="Polar residues" evidence="6">
    <location>
        <begin position="317"/>
        <end position="332"/>
    </location>
</feature>
<feature type="compositionally biased region" description="Low complexity" evidence="6">
    <location>
        <begin position="362"/>
        <end position="374"/>
    </location>
</feature>
<feature type="modified residue" description="Phosphoserine" evidence="1">
    <location>
        <position position="5"/>
    </location>
</feature>
<feature type="modified residue" description="Phosphotyrosine" evidence="3">
    <location>
        <position position="247"/>
    </location>
</feature>
<feature type="modified residue" description="Phosphoserine" evidence="2">
    <location>
        <position position="255"/>
    </location>
</feature>
<feature type="modified residue" description="Phosphoserine" evidence="1">
    <location>
        <position position="257"/>
    </location>
</feature>
<feature type="modified residue" description="Phosphoserine" evidence="2">
    <location>
        <position position="262"/>
    </location>
</feature>
<feature type="modified residue" description="S-nitrosocysteine" evidence="3">
    <location>
        <position position="271"/>
    </location>
</feature>
<feature type="modified residue" description="Phosphothreonine" evidence="3">
    <location>
        <position position="275"/>
    </location>
</feature>
<feature type="modified residue" description="Phosphoserine" evidence="3">
    <location>
        <position position="306"/>
    </location>
</feature>
<feature type="modified residue" description="Phosphoserine" evidence="2">
    <location>
        <position position="314"/>
    </location>
</feature>
<feature type="modified residue" description="Phosphoserine; by CK1" evidence="2">
    <location>
        <position position="325"/>
    </location>
</feature>
<feature type="modified residue" description="Phosphothreonine" evidence="3">
    <location>
        <position position="326"/>
    </location>
</feature>
<feature type="modified residue" description="Phosphoserine; by CK1" evidence="2">
    <location>
        <position position="328"/>
    </location>
</feature>
<feature type="modified residue" description="Phosphoserine; by CK1" evidence="2">
    <location>
        <position position="330"/>
    </location>
</feature>
<feature type="modified residue" description="Phosphoserine" evidence="2">
    <location>
        <position position="344"/>
    </location>
</feature>
<feature type="modified residue" description="Phosphoserine" evidence="3">
    <location>
        <position position="365"/>
    </location>
</feature>
<feature type="modified residue" description="Phosphoserine; by PKC/PRKCG and PKC/PRKCD" evidence="3">
    <location>
        <position position="368"/>
    </location>
</feature>
<feature type="modified residue" description="Phosphoserine" evidence="3">
    <location>
        <position position="369"/>
    </location>
</feature>
<feature type="modified residue" description="Phosphoserine" evidence="1">
    <location>
        <position position="373"/>
    </location>
</feature>
<feature type="disulfide bond" evidence="2">
    <location>
        <begin position="54"/>
        <end position="192"/>
    </location>
</feature>
<feature type="disulfide bond" evidence="2">
    <location>
        <begin position="187"/>
        <end position="198"/>
    </location>
</feature>
<feature type="cross-link" description="Glycyl lysine isopeptide (Lys-Gly) (interchain with G-Cter in SUMO)" evidence="2">
    <location>
        <position position="144"/>
    </location>
</feature>
<feature type="cross-link" description="Glycyl lysine isopeptide (Lys-Gly) (interchain with G-Cter in SUMO)" evidence="2">
    <location>
        <position position="237"/>
    </location>
</feature>
<reference key="1">
    <citation type="submission" date="2003-11" db="EMBL/GenBank/DDBJ databases">
        <title>Characterization of connexin 43 in the canine ovary.</title>
        <authorList>
            <person name="Willingham-Rocky L.A."/>
            <person name="Golding M.C."/>
            <person name="Westhusin M.E."/>
            <person name="Kraemer D.C."/>
            <person name="Burghardt R.C."/>
        </authorList>
    </citation>
    <scope>NUCLEOTIDE SEQUENCE [MRNA]</scope>
    <source>
        <tissue>Ovary</tissue>
    </source>
</reference>
<comment type="function">
    <text evidence="1 3">Gap junction protein that acts as a regulator of bladder capacity. A gap junction consists of a cluster of closely packed pairs of transmembrane channels, the connexons, through which materials of low MW diffuse from one cell to a neighboring cell. May play a critical role in the physiology of hearing by participating in the recycling of potassium to the cochlear endolymph. Negative regulator of bladder functional capacity: acts by enhancing intercellular electrical and chemical transmission, thus sensitizing bladder muscles to cholinergic neural stimuli and causing them to contract. May play a role in cell growth inhibition through the regulation of NOV expression and localization. Plays an essential role in gap junction communication in the ventricles (By similarity).</text>
</comment>
<comment type="subunit">
    <text evidence="1 2 3">A connexon is composed of a hexamer of connexins. Interacts with SGSM3 (By similarity). Interacts with RIC1/CIP150 (By similarity). Interacts with CNST and CSNK1D (By similarity). Interacts (via C-terminus) with TJP1. Interacts (via C-terminus) with SRC (via SH3 domain). Interacts (not ubiquitinated) with UBQLN4 (via UBA domain) (By similarity). Interacts with NOV. Interacts with TMEM65 (By similarity). Interacts with ANK3/ANKG and PKP2 (By similarity).</text>
</comment>
<comment type="subcellular location">
    <subcellularLocation>
        <location evidence="2">Cell membrane</location>
        <topology evidence="5">Multi-pass membrane protein</topology>
    </subcellularLocation>
    <subcellularLocation>
        <location evidence="2">Cell junction</location>
        <location evidence="2">Gap junction</location>
    </subcellularLocation>
    <subcellularLocation>
        <location evidence="3">Endoplasmic reticulum</location>
    </subcellularLocation>
    <text evidence="3">Localizes at the intercalated disk (ICD) in cardiomyocytes and the proper localization at ICD is dependent on TMEM65.</text>
</comment>
<comment type="PTM">
    <text evidence="1 2 4">Phosphorylation at Ser-325, Ser-328 and Ser-330 by CK1 modulates gap junction assembly. Phosphorylated at Ser-368 by PRKCG; phosphorylation induces disassembly of gap junction plaques and inhibition of gap junction activity. Phosphorylation at Ser-368 by PRKCD triggers its internalization into small vesicles leading to proteasome-mediated degradation (By similarity).</text>
</comment>
<comment type="PTM">
    <text evidence="2">Sumoylated with SUMO1, SUMO2 and SUMO3, which may regulate the level of functional Cx43 gap junctions at the plasma membrane. May be desumoylated by SENP1 or SENP2 (By similarity).</text>
</comment>
<comment type="PTM">
    <text evidence="3">S-nitrosylation at Cys-271 is enriched at the muscle endothelial gap junction in arteries, it augments channel permeability and may regulate of smooth muscle cell to endothelial cell communication.</text>
</comment>
<comment type="PTM">
    <text evidence="3">Acetylated in the developing cortex; leading to delocalization from the cell membrane.</text>
</comment>
<comment type="similarity">
    <text evidence="7">Belongs to the connexin family. Alpha-type (group II) subfamily.</text>
</comment>
<sequence>MGGWSALAKLLGKVQAYSPAGGKVWLSVLFIFRILLLGTAVESAWGDEQSAFRCNTQQPGCENVCYDKSFPISHVRFWVLQIIFVSVPTLLYLAHVFYVMRKEEKLNKKEEELKVAQTDGANVDMHLKQIEIKKFKYGIEEHGKVKMRGGLLRTYIISILFKSVFEVAFLLIQWYIYGFSLSAVYTCKREPCPHQVDCFLSRPTEKTIFIIFMLVVSLVSLALNIIELFYVFFKGVKDRVKGQSDPYHATTGPLSPSKDCGSPEYAYFNGCSSPTAPLSPMSPPGYKLVTGDRNNSSCRNYNKQASEQNWANYSAEQNRMGQAGSTISNSHAQPFDFPDDNQNSKKLAAGHELQPLAIVDQRPSSRASSRASSRPRPDDLEI</sequence>
<accession>Q6S9C0</accession>
<gene>
    <name type="primary">GJA1</name>
</gene>
<protein>
    <recommendedName>
        <fullName>Gap junction alpha-1 protein</fullName>
    </recommendedName>
    <alternativeName>
        <fullName>Connexin-43</fullName>
        <shortName>Cx43</shortName>
    </alternativeName>
</protein>